<sequence>MGESFDAFSLDEDMPMETNEKRKDGRDRGTRAQSAVVVQPVAASRHK</sequence>
<reference key="1">
    <citation type="journal article" date="2006" name="J. Virol.">
        <title>Psittacid herpesvirus 1 and infectious laryngotracheitis virus: Comparative genome sequence analysis of two avian alphaherpesviruses.</title>
        <authorList>
            <person name="Thureen D.R."/>
            <person name="Keeler C.L. Jr."/>
        </authorList>
    </citation>
    <scope>NUCLEOTIDE SEQUENCE [LARGE SCALE GENOMIC DNA]</scope>
</reference>
<organismHost>
    <name type="scientific">Amazona oratrix</name>
    <name type="common">yellow-headed parrot</name>
    <dbReference type="NCBI Taxonomy" id="152276"/>
</organismHost>
<proteinExistence type="inferred from homology"/>
<comment type="function">
    <text evidence="1">Plays an important role in the cytoplasmic envelopment of tegument proteins and capsids during the assembly and egress processes. Also participates in viral entry at the fusion step probably by regulating the core fusion machinery.</text>
</comment>
<comment type="subcellular location">
    <subcellularLocation>
        <location evidence="1">Virion tegument</location>
    </subcellularLocation>
    <subcellularLocation>
        <location evidence="1">Virion membrane</location>
        <topology evidence="1">Lipid-anchor</topology>
    </subcellularLocation>
    <subcellularLocation>
        <location evidence="1">Host cell membrane</location>
        <topology evidence="1">Lipid-anchor</topology>
        <orientation evidence="1">Cytoplasmic side</orientation>
    </subcellularLocation>
    <subcellularLocation>
        <location evidence="1">Host Golgi apparatus membrane</location>
        <topology evidence="1">Lipid-anchor</topology>
        <orientation evidence="1">Cytoplasmic side</orientation>
    </subcellularLocation>
    <text evidence="1">Virion membrane-associated tegument protein. Associates with host membrane lipids rafts. During virion morphogenesis, this protein probably accumulates in the endosomes and trans-Golgi where secondary envelopment occurs. It is probably transported to the cell surface from where it is endocytosed and directed to the trans-Golgi network (TGN).</text>
</comment>
<comment type="miscellaneous">
    <text>The PsHV-1 UL11 is much shorter than the other family members.</text>
</comment>
<comment type="similarity">
    <text evidence="3">Belongs to the herpesviridae HHV-1 UL11 family.</text>
</comment>
<evidence type="ECO:0000250" key="1">
    <source>
        <dbReference type="UniProtKB" id="P04289"/>
    </source>
</evidence>
<evidence type="ECO:0000256" key="2">
    <source>
        <dbReference type="SAM" id="MobiDB-lite"/>
    </source>
</evidence>
<evidence type="ECO:0000305" key="3"/>
<accession>Q6UDH5</accession>
<dbReference type="EMBL" id="AY372243">
    <property type="protein sequence ID" value="AAQ73735.1"/>
    <property type="molecule type" value="Genomic_DNA"/>
</dbReference>
<dbReference type="SMR" id="Q6UDH5"/>
<dbReference type="Proteomes" id="UP000006840">
    <property type="component" value="Segment"/>
</dbReference>
<dbReference type="GO" id="GO:0044178">
    <property type="term" value="C:host cell Golgi membrane"/>
    <property type="evidence" value="ECO:0007669"/>
    <property type="project" value="UniProtKB-SubCell"/>
</dbReference>
<dbReference type="GO" id="GO:0020002">
    <property type="term" value="C:host cell plasma membrane"/>
    <property type="evidence" value="ECO:0007669"/>
    <property type="project" value="UniProtKB-SubCell"/>
</dbReference>
<dbReference type="GO" id="GO:0016020">
    <property type="term" value="C:membrane"/>
    <property type="evidence" value="ECO:0007669"/>
    <property type="project" value="UniProtKB-KW"/>
</dbReference>
<dbReference type="GO" id="GO:0019033">
    <property type="term" value="C:viral tegument"/>
    <property type="evidence" value="ECO:0007669"/>
    <property type="project" value="UniProtKB-SubCell"/>
</dbReference>
<dbReference type="GO" id="GO:0055036">
    <property type="term" value="C:virion membrane"/>
    <property type="evidence" value="ECO:0007669"/>
    <property type="project" value="UniProtKB-SubCell"/>
</dbReference>
<keyword id="KW-1032">Host cell membrane</keyword>
<keyword id="KW-1040">Host Golgi apparatus</keyword>
<keyword id="KW-1043">Host membrane</keyword>
<keyword id="KW-0449">Lipoprotein</keyword>
<keyword id="KW-0472">Membrane</keyword>
<keyword id="KW-0519">Myristate</keyword>
<keyword id="KW-1185">Reference proteome</keyword>
<keyword id="KW-0946">Virion</keyword>
<keyword id="KW-0920">Virion tegument</keyword>
<protein>
    <recommendedName>
        <fullName>Tegument protein UL11</fullName>
    </recommendedName>
</protein>
<organism>
    <name type="scientific">Psittacid herpesvirus 1 (isolate Amazon parrot/-/97-0001/1997)</name>
    <name type="common">PsHV-1</name>
    <name type="synonym">Pacheco's disease virus</name>
    <dbReference type="NCBI Taxonomy" id="670426"/>
    <lineage>
        <taxon>Viruses</taxon>
        <taxon>Duplodnaviria</taxon>
        <taxon>Heunggongvirae</taxon>
        <taxon>Peploviricota</taxon>
        <taxon>Herviviricetes</taxon>
        <taxon>Herpesvirales</taxon>
        <taxon>Orthoherpesviridae</taxon>
        <taxon>Alphaherpesvirinae</taxon>
        <taxon>Iltovirus</taxon>
        <taxon>Iltovirus psittacidalpha1</taxon>
        <taxon>Psittacid alphaherpesvirus 1</taxon>
    </lineage>
</organism>
<feature type="initiator methionine" description="Removed; by host" evidence="1">
    <location>
        <position position="1"/>
    </location>
</feature>
<feature type="chain" id="PRO_0000406861" description="Tegument protein UL11">
    <location>
        <begin position="2"/>
        <end position="47"/>
    </location>
</feature>
<feature type="region of interest" description="Disordered" evidence="2">
    <location>
        <begin position="1"/>
        <end position="47"/>
    </location>
</feature>
<feature type="compositionally biased region" description="Basic and acidic residues" evidence="2">
    <location>
        <begin position="18"/>
        <end position="30"/>
    </location>
</feature>
<feature type="compositionally biased region" description="Low complexity" evidence="2">
    <location>
        <begin position="32"/>
        <end position="47"/>
    </location>
</feature>
<feature type="lipid moiety-binding region" description="N-myristoyl glycine; by host" evidence="1">
    <location>
        <position position="2"/>
    </location>
</feature>
<name>TEG2_PSHV1</name>
<gene>
    <name type="primary">UL11</name>
</gene>